<protein>
    <recommendedName>
        <fullName>P-selectin</fullName>
    </recommendedName>
    <alternativeName>
        <fullName>CD62 antigen-like family member P</fullName>
    </alternativeName>
    <alternativeName>
        <fullName>Granule membrane protein 140</fullName>
        <shortName evidence="22">GMP-140</shortName>
    </alternativeName>
    <alternativeName>
        <fullName>Leukocyte-endothelial cell adhesion molecule 3</fullName>
        <shortName>LECAM3</shortName>
    </alternativeName>
    <alternativeName>
        <fullName>Platelet activation dependent granule-external membrane protein</fullName>
        <shortName>PADGEM</shortName>
    </alternativeName>
    <cdAntigenName>CD62P</cdAntigenName>
</protein>
<proteinExistence type="evidence at protein level"/>
<dbReference type="EMBL" id="M60234">
    <property type="protein sequence ID" value="AAA35910.1"/>
    <property type="molecule type" value="Genomic_DNA"/>
</dbReference>
<dbReference type="EMBL" id="M60217">
    <property type="protein sequence ID" value="AAA35910.1"/>
    <property type="status" value="JOINED"/>
    <property type="molecule type" value="Genomic_DNA"/>
</dbReference>
<dbReference type="EMBL" id="M60218">
    <property type="protein sequence ID" value="AAA35910.1"/>
    <property type="status" value="JOINED"/>
    <property type="molecule type" value="Genomic_DNA"/>
</dbReference>
<dbReference type="EMBL" id="M60219">
    <property type="protein sequence ID" value="AAA35910.1"/>
    <property type="status" value="JOINED"/>
    <property type="molecule type" value="Genomic_DNA"/>
</dbReference>
<dbReference type="EMBL" id="M60222">
    <property type="protein sequence ID" value="AAA35910.1"/>
    <property type="status" value="JOINED"/>
    <property type="molecule type" value="Genomic_DNA"/>
</dbReference>
<dbReference type="EMBL" id="M60223">
    <property type="protein sequence ID" value="AAA35910.1"/>
    <property type="status" value="JOINED"/>
    <property type="molecule type" value="Genomic_DNA"/>
</dbReference>
<dbReference type="EMBL" id="M60224">
    <property type="protein sequence ID" value="AAA35910.1"/>
    <property type="status" value="JOINED"/>
    <property type="molecule type" value="Genomic_DNA"/>
</dbReference>
<dbReference type="EMBL" id="M60225">
    <property type="protein sequence ID" value="AAA35910.1"/>
    <property type="status" value="JOINED"/>
    <property type="molecule type" value="Genomic_DNA"/>
</dbReference>
<dbReference type="EMBL" id="M60226">
    <property type="protein sequence ID" value="AAA35910.1"/>
    <property type="status" value="JOINED"/>
    <property type="molecule type" value="Genomic_DNA"/>
</dbReference>
<dbReference type="EMBL" id="M60227">
    <property type="protein sequence ID" value="AAA35910.1"/>
    <property type="status" value="JOINED"/>
    <property type="molecule type" value="Genomic_DNA"/>
</dbReference>
<dbReference type="EMBL" id="M60228">
    <property type="protein sequence ID" value="AAA35910.1"/>
    <property type="status" value="JOINED"/>
    <property type="molecule type" value="Genomic_DNA"/>
</dbReference>
<dbReference type="EMBL" id="M60229">
    <property type="protein sequence ID" value="AAA35910.1"/>
    <property type="status" value="JOINED"/>
    <property type="molecule type" value="Genomic_DNA"/>
</dbReference>
<dbReference type="EMBL" id="M60231">
    <property type="protein sequence ID" value="AAA35910.1"/>
    <property type="status" value="JOINED"/>
    <property type="molecule type" value="Genomic_DNA"/>
</dbReference>
<dbReference type="EMBL" id="M60232">
    <property type="protein sequence ID" value="AAA35910.1"/>
    <property type="status" value="JOINED"/>
    <property type="molecule type" value="Genomic_DNA"/>
</dbReference>
<dbReference type="EMBL" id="M60233">
    <property type="protein sequence ID" value="AAA35910.1"/>
    <property type="status" value="JOINED"/>
    <property type="molecule type" value="Genomic_DNA"/>
</dbReference>
<dbReference type="EMBL" id="M25322">
    <property type="protein sequence ID" value="AAA35911.1"/>
    <property type="molecule type" value="mRNA"/>
</dbReference>
<dbReference type="EMBL" id="AF542391">
    <property type="protein sequence ID" value="AAN06828.1"/>
    <property type="molecule type" value="Genomic_DNA"/>
</dbReference>
<dbReference type="EMBL" id="AL022146">
    <property type="status" value="NOT_ANNOTATED_CDS"/>
    <property type="molecule type" value="Genomic_DNA"/>
</dbReference>
<dbReference type="EMBL" id="Z99572">
    <property type="status" value="NOT_ANNOTATED_CDS"/>
    <property type="molecule type" value="Genomic_DNA"/>
</dbReference>
<dbReference type="EMBL" id="CH471067">
    <property type="protein sequence ID" value="EAW90851.1"/>
    <property type="molecule type" value="Genomic_DNA"/>
</dbReference>
<dbReference type="CCDS" id="CCDS1282.1"/>
<dbReference type="PIR" id="A30359">
    <property type="entry name" value="A30359"/>
</dbReference>
<dbReference type="RefSeq" id="NP_002996.2">
    <property type="nucleotide sequence ID" value="NM_003005.4"/>
</dbReference>
<dbReference type="RefSeq" id="XP_005245492.1">
    <property type="nucleotide sequence ID" value="XM_005245435.3"/>
</dbReference>
<dbReference type="RefSeq" id="XP_005245493.1">
    <property type="nucleotide sequence ID" value="XM_005245436.5"/>
</dbReference>
<dbReference type="PDB" id="1FSB">
    <property type="method" value="NMR"/>
    <property type="chains" value="A=160-199"/>
</dbReference>
<dbReference type="PDB" id="1G1Q">
    <property type="method" value="X-ray"/>
    <property type="resolution" value="2.40 A"/>
    <property type="chains" value="A/B/C/D=42-198"/>
</dbReference>
<dbReference type="PDB" id="1G1R">
    <property type="method" value="X-ray"/>
    <property type="resolution" value="3.40 A"/>
    <property type="chains" value="A/B/C/D=42-198"/>
</dbReference>
<dbReference type="PDB" id="1G1S">
    <property type="method" value="X-ray"/>
    <property type="resolution" value="1.90 A"/>
    <property type="chains" value="A/B=42-198"/>
</dbReference>
<dbReference type="PDB" id="1HES">
    <property type="method" value="X-ray"/>
    <property type="resolution" value="3.00 A"/>
    <property type="chains" value="P=813-830"/>
</dbReference>
<dbReference type="PDBsum" id="1FSB"/>
<dbReference type="PDBsum" id="1G1Q"/>
<dbReference type="PDBsum" id="1G1R"/>
<dbReference type="PDBsum" id="1G1S"/>
<dbReference type="PDBsum" id="1HES"/>
<dbReference type="SMR" id="P16109"/>
<dbReference type="BioGRID" id="112303">
    <property type="interactions" value="11"/>
</dbReference>
<dbReference type="CORUM" id="P16109"/>
<dbReference type="DIP" id="DIP-37667N"/>
<dbReference type="ELM" id="P16109"/>
<dbReference type="FunCoup" id="P16109">
    <property type="interactions" value="185"/>
</dbReference>
<dbReference type="IntAct" id="P16109">
    <property type="interactions" value="2"/>
</dbReference>
<dbReference type="STRING" id="9606.ENSP00000263686"/>
<dbReference type="BindingDB" id="P16109"/>
<dbReference type="ChEMBL" id="CHEMBL5378"/>
<dbReference type="DrugBank" id="DB04426">
    <property type="generic name" value="Alpha-Methyl-N-Acetyl-D-Glucosamine"/>
</dbReference>
<dbReference type="DrugBank" id="DB16101">
    <property type="generic name" value="Baicalein"/>
</dbReference>
<dbReference type="DrugBank" id="DB15271">
    <property type="generic name" value="Crizanlizumab"/>
</dbReference>
<dbReference type="DrugBank" id="DB06779">
    <property type="generic name" value="Dalteparin"/>
</dbReference>
<dbReference type="DrugBank" id="DB01109">
    <property type="generic name" value="Heparin"/>
</dbReference>
<dbReference type="DrugBank" id="DB03721">
    <property type="generic name" value="N-acetyl-alpha-neuraminic acid"/>
</dbReference>
<dbReference type="DrugBank" id="DB08813">
    <property type="generic name" value="Nadroparin"/>
</dbReference>
<dbReference type="DrugBank" id="DB12211">
    <property type="generic name" value="PSI-697"/>
</dbReference>
<dbReference type="DrugBank" id="DB12778">
    <property type="generic name" value="Rivipansel"/>
</dbReference>
<dbReference type="DrugCentral" id="P16109"/>
<dbReference type="GuidetoPHARMACOLOGY" id="3103"/>
<dbReference type="UniLectin" id="P16109"/>
<dbReference type="GlyConnect" id="2095">
    <property type="glycosylation" value="5 N-Linked glycans (3 sites)"/>
</dbReference>
<dbReference type="GlyCosmos" id="P16109">
    <property type="glycosylation" value="13 sites, 5 glycans"/>
</dbReference>
<dbReference type="GlyGen" id="P16109">
    <property type="glycosylation" value="16 sites, 8 N-linked glycans (4 sites)"/>
</dbReference>
<dbReference type="iPTMnet" id="P16109"/>
<dbReference type="PhosphoSitePlus" id="P16109"/>
<dbReference type="SwissPalm" id="P16109"/>
<dbReference type="BioMuta" id="SELP"/>
<dbReference type="DMDM" id="215274139"/>
<dbReference type="jPOST" id="P16109"/>
<dbReference type="MassIVE" id="P16109"/>
<dbReference type="PaxDb" id="9606-ENSP00000263686"/>
<dbReference type="PeptideAtlas" id="P16109"/>
<dbReference type="ProteomicsDB" id="53287"/>
<dbReference type="ABCD" id="P16109">
    <property type="antibodies" value="5 sequenced antibodies"/>
</dbReference>
<dbReference type="Antibodypedia" id="794">
    <property type="antibodies" value="1300 antibodies from 45 providers"/>
</dbReference>
<dbReference type="DNASU" id="6403"/>
<dbReference type="Ensembl" id="ENST00000263686.11">
    <property type="protein sequence ID" value="ENSP00000263686.5"/>
    <property type="gene ID" value="ENSG00000174175.17"/>
</dbReference>
<dbReference type="GeneID" id="6403"/>
<dbReference type="KEGG" id="hsa:6403"/>
<dbReference type="MANE-Select" id="ENST00000263686.11">
    <property type="protein sequence ID" value="ENSP00000263686.5"/>
    <property type="RefSeq nucleotide sequence ID" value="NM_003005.4"/>
    <property type="RefSeq protein sequence ID" value="NP_002996.2"/>
</dbReference>
<dbReference type="UCSC" id="uc001ggi.5">
    <property type="organism name" value="human"/>
</dbReference>
<dbReference type="AGR" id="HGNC:10721"/>
<dbReference type="CTD" id="6403"/>
<dbReference type="DisGeNET" id="6403"/>
<dbReference type="GeneCards" id="SELP"/>
<dbReference type="HGNC" id="HGNC:10721">
    <property type="gene designation" value="SELP"/>
</dbReference>
<dbReference type="HPA" id="ENSG00000174175">
    <property type="expression patterns" value="Low tissue specificity"/>
</dbReference>
<dbReference type="MalaCards" id="SELP"/>
<dbReference type="MIM" id="173610">
    <property type="type" value="gene"/>
</dbReference>
<dbReference type="neXtProt" id="NX_P16109"/>
<dbReference type="OpenTargets" id="ENSG00000174175"/>
<dbReference type="PharmGKB" id="PA35643"/>
<dbReference type="VEuPathDB" id="HostDB:ENSG00000174175"/>
<dbReference type="eggNOG" id="KOG4297">
    <property type="taxonomic scope" value="Eukaryota"/>
</dbReference>
<dbReference type="GeneTree" id="ENSGT00940000161063"/>
<dbReference type="InParanoid" id="P16109"/>
<dbReference type="OMA" id="DWCPEPP"/>
<dbReference type="OrthoDB" id="406096at2759"/>
<dbReference type="PAN-GO" id="P16109">
    <property type="GO annotations" value="7 GO annotations based on evolutionary models"/>
</dbReference>
<dbReference type="PhylomeDB" id="P16109"/>
<dbReference type="TreeFam" id="TF326910"/>
<dbReference type="PathwayCommons" id="P16109"/>
<dbReference type="Reactome" id="R-HSA-114608">
    <property type="pathway name" value="Platelet degranulation"/>
</dbReference>
<dbReference type="Reactome" id="R-HSA-202733">
    <property type="pathway name" value="Cell surface interactions at the vascular wall"/>
</dbReference>
<dbReference type="SignaLink" id="P16109"/>
<dbReference type="SIGNOR" id="P16109"/>
<dbReference type="BioGRID-ORCS" id="6403">
    <property type="hits" value="10 hits in 1155 CRISPR screens"/>
</dbReference>
<dbReference type="ChiTaRS" id="SELP">
    <property type="organism name" value="human"/>
</dbReference>
<dbReference type="EvolutionaryTrace" id="P16109"/>
<dbReference type="GeneWiki" id="P-selectin"/>
<dbReference type="GenomeRNAi" id="6403"/>
<dbReference type="Pharos" id="P16109">
    <property type="development level" value="Tclin"/>
</dbReference>
<dbReference type="PRO" id="PR:P16109"/>
<dbReference type="Proteomes" id="UP000005640">
    <property type="component" value="Chromosome 1"/>
</dbReference>
<dbReference type="RNAct" id="P16109">
    <property type="molecule type" value="protein"/>
</dbReference>
<dbReference type="Bgee" id="ENSG00000174175">
    <property type="expression patterns" value="Expressed in right coronary artery and 129 other cell types or tissues"/>
</dbReference>
<dbReference type="ExpressionAtlas" id="P16109">
    <property type="expression patterns" value="baseline and differential"/>
</dbReference>
<dbReference type="GO" id="GO:0009897">
    <property type="term" value="C:external side of plasma membrane"/>
    <property type="evidence" value="ECO:0000314"/>
    <property type="project" value="BHF-UCL"/>
</dbReference>
<dbReference type="GO" id="GO:0005615">
    <property type="term" value="C:extracellular space"/>
    <property type="evidence" value="ECO:0000314"/>
    <property type="project" value="BHF-UCL"/>
</dbReference>
<dbReference type="GO" id="GO:0005886">
    <property type="term" value="C:plasma membrane"/>
    <property type="evidence" value="ECO:0000314"/>
    <property type="project" value="UniProtKB"/>
</dbReference>
<dbReference type="GO" id="GO:0031092">
    <property type="term" value="C:platelet alpha granule membrane"/>
    <property type="evidence" value="ECO:0000314"/>
    <property type="project" value="MGI"/>
</dbReference>
<dbReference type="GO" id="GO:0031088">
    <property type="term" value="C:platelet dense granule membrane"/>
    <property type="evidence" value="ECO:0000304"/>
    <property type="project" value="Reactome"/>
</dbReference>
<dbReference type="GO" id="GO:0005509">
    <property type="term" value="F:calcium ion binding"/>
    <property type="evidence" value="ECO:0000314"/>
    <property type="project" value="UniProtKB"/>
</dbReference>
<dbReference type="GO" id="GO:0048306">
    <property type="term" value="F:calcium-dependent protein binding"/>
    <property type="evidence" value="ECO:0007669"/>
    <property type="project" value="Ensembl"/>
</dbReference>
<dbReference type="GO" id="GO:0042806">
    <property type="term" value="F:fucose binding"/>
    <property type="evidence" value="ECO:0000314"/>
    <property type="project" value="BHF-UCL"/>
</dbReference>
<dbReference type="GO" id="GO:0043208">
    <property type="term" value="F:glycosphingolipid binding"/>
    <property type="evidence" value="ECO:0000304"/>
    <property type="project" value="BHF-UCL"/>
</dbReference>
<dbReference type="GO" id="GO:0008201">
    <property type="term" value="F:heparin binding"/>
    <property type="evidence" value="ECO:0000314"/>
    <property type="project" value="BHF-UCL"/>
</dbReference>
<dbReference type="GO" id="GO:0005178">
    <property type="term" value="F:integrin binding"/>
    <property type="evidence" value="ECO:0000314"/>
    <property type="project" value="UniProtKB"/>
</dbReference>
<dbReference type="GO" id="GO:0001530">
    <property type="term" value="F:lipopolysaccharide binding"/>
    <property type="evidence" value="ECO:0000315"/>
    <property type="project" value="BHF-UCL"/>
</dbReference>
<dbReference type="GO" id="GO:0070492">
    <property type="term" value="F:oligosaccharide binding"/>
    <property type="evidence" value="ECO:0000314"/>
    <property type="project" value="UniProtKB"/>
</dbReference>
<dbReference type="GO" id="GO:0033691">
    <property type="term" value="F:sialic acid binding"/>
    <property type="evidence" value="ECO:0000314"/>
    <property type="project" value="BHF-UCL"/>
</dbReference>
<dbReference type="GO" id="GO:0016339">
    <property type="term" value="P:calcium-dependent cell-cell adhesion via plasma membrane cell adhesion molecules"/>
    <property type="evidence" value="ECO:0000315"/>
    <property type="project" value="UniProtKB"/>
</dbReference>
<dbReference type="GO" id="GO:0007155">
    <property type="term" value="P:cell adhesion"/>
    <property type="evidence" value="ECO:0000304"/>
    <property type="project" value="ProtInc"/>
</dbReference>
<dbReference type="GO" id="GO:0098609">
    <property type="term" value="P:cell-cell adhesion"/>
    <property type="evidence" value="ECO:0000314"/>
    <property type="project" value="UniProtKB"/>
</dbReference>
<dbReference type="GO" id="GO:0050829">
    <property type="term" value="P:defense response to Gram-negative bacterium"/>
    <property type="evidence" value="ECO:0000305"/>
    <property type="project" value="BHF-UCL"/>
</dbReference>
<dbReference type="GO" id="GO:0007157">
    <property type="term" value="P:heterophilic cell-cell adhesion via plasma membrane cell adhesion molecules"/>
    <property type="evidence" value="ECO:0000318"/>
    <property type="project" value="GO_Central"/>
</dbReference>
<dbReference type="GO" id="GO:0006954">
    <property type="term" value="P:inflammatory response"/>
    <property type="evidence" value="ECO:0007669"/>
    <property type="project" value="Ensembl"/>
</dbReference>
<dbReference type="GO" id="GO:0007159">
    <property type="term" value="P:leukocyte cell-cell adhesion"/>
    <property type="evidence" value="ECO:0000314"/>
    <property type="project" value="BHF-UCL"/>
</dbReference>
<dbReference type="GO" id="GO:0050901">
    <property type="term" value="P:leukocyte tethering or rolling"/>
    <property type="evidence" value="ECO:0000315"/>
    <property type="project" value="UniProtKB"/>
</dbReference>
<dbReference type="GO" id="GO:0002687">
    <property type="term" value="P:positive regulation of leukocyte migration"/>
    <property type="evidence" value="ECO:0007669"/>
    <property type="project" value="Ensembl"/>
</dbReference>
<dbReference type="GO" id="GO:1903238">
    <property type="term" value="P:positive regulation of leukocyte tethering or rolling"/>
    <property type="evidence" value="ECO:0000250"/>
    <property type="project" value="UniProtKB"/>
</dbReference>
<dbReference type="GO" id="GO:0051897">
    <property type="term" value="P:positive regulation of phosphatidylinositol 3-kinase/protein kinase B signal transduction"/>
    <property type="evidence" value="ECO:0000314"/>
    <property type="project" value="UniProtKB"/>
</dbReference>
<dbReference type="GO" id="GO:0010572">
    <property type="term" value="P:positive regulation of platelet activation"/>
    <property type="evidence" value="ECO:0000250"/>
    <property type="project" value="BHF-UCL"/>
</dbReference>
<dbReference type="GO" id="GO:0033623">
    <property type="term" value="P:regulation of integrin activation"/>
    <property type="evidence" value="ECO:0000315"/>
    <property type="project" value="UniProtKB"/>
</dbReference>
<dbReference type="GO" id="GO:0034097">
    <property type="term" value="P:response to cytokine"/>
    <property type="evidence" value="ECO:0000318"/>
    <property type="project" value="GO_Central"/>
</dbReference>
<dbReference type="GO" id="GO:0032496">
    <property type="term" value="P:response to lipopolysaccharide"/>
    <property type="evidence" value="ECO:0000305"/>
    <property type="project" value="BHF-UCL"/>
</dbReference>
<dbReference type="CDD" id="cd00033">
    <property type="entry name" value="CCP"/>
    <property type="match status" value="9"/>
</dbReference>
<dbReference type="CDD" id="cd03592">
    <property type="entry name" value="CLECT_selectins_like"/>
    <property type="match status" value="1"/>
</dbReference>
<dbReference type="CDD" id="cd00054">
    <property type="entry name" value="EGF_CA"/>
    <property type="match status" value="1"/>
</dbReference>
<dbReference type="FunFam" id="3.10.100.10:FF:000007">
    <property type="entry name" value="L-selectin"/>
    <property type="match status" value="1"/>
</dbReference>
<dbReference type="FunFam" id="2.10.25.10:FF:000176">
    <property type="entry name" value="Selectin P"/>
    <property type="match status" value="1"/>
</dbReference>
<dbReference type="FunFam" id="2.10.70.10:FF:000001">
    <property type="entry name" value="Selectin P"/>
    <property type="match status" value="9"/>
</dbReference>
<dbReference type="Gene3D" id="2.10.70.10">
    <property type="entry name" value="Complement Module, domain 1"/>
    <property type="match status" value="9"/>
</dbReference>
<dbReference type="Gene3D" id="2.10.25.10">
    <property type="entry name" value="Laminin"/>
    <property type="match status" value="1"/>
</dbReference>
<dbReference type="Gene3D" id="3.10.100.10">
    <property type="entry name" value="Mannose-Binding Protein A, subunit A"/>
    <property type="match status" value="1"/>
</dbReference>
<dbReference type="IDEAL" id="IID00353"/>
<dbReference type="InterPro" id="IPR001304">
    <property type="entry name" value="C-type_lectin-like"/>
</dbReference>
<dbReference type="InterPro" id="IPR016186">
    <property type="entry name" value="C-type_lectin-like/link_sf"/>
</dbReference>
<dbReference type="InterPro" id="IPR018378">
    <property type="entry name" value="C-type_lectin_CS"/>
</dbReference>
<dbReference type="InterPro" id="IPR050350">
    <property type="entry name" value="Compl-Cell_Adhes-Reg"/>
</dbReference>
<dbReference type="InterPro" id="IPR016187">
    <property type="entry name" value="CTDL_fold"/>
</dbReference>
<dbReference type="InterPro" id="IPR000742">
    <property type="entry name" value="EGF-like_dom"/>
</dbReference>
<dbReference type="InterPro" id="IPR033991">
    <property type="entry name" value="Selectin_CTLD"/>
</dbReference>
<dbReference type="InterPro" id="IPR002396">
    <property type="entry name" value="Selectin_superfamily"/>
</dbReference>
<dbReference type="InterPro" id="IPR035976">
    <property type="entry name" value="Sushi/SCR/CCP_sf"/>
</dbReference>
<dbReference type="InterPro" id="IPR000436">
    <property type="entry name" value="Sushi_SCR_CCP_dom"/>
</dbReference>
<dbReference type="PANTHER" id="PTHR19325">
    <property type="entry name" value="COMPLEMENT COMPONENT-RELATED SUSHI DOMAIN-CONTAINING"/>
    <property type="match status" value="1"/>
</dbReference>
<dbReference type="PANTHER" id="PTHR19325:SF484">
    <property type="entry name" value="P-SELECTIN"/>
    <property type="match status" value="1"/>
</dbReference>
<dbReference type="Pfam" id="PF00059">
    <property type="entry name" value="Lectin_C"/>
    <property type="match status" value="1"/>
</dbReference>
<dbReference type="Pfam" id="PF00084">
    <property type="entry name" value="Sushi"/>
    <property type="match status" value="9"/>
</dbReference>
<dbReference type="PRINTS" id="PR00343">
    <property type="entry name" value="SELECTIN"/>
</dbReference>
<dbReference type="SMART" id="SM00032">
    <property type="entry name" value="CCP"/>
    <property type="match status" value="9"/>
</dbReference>
<dbReference type="SMART" id="SM00034">
    <property type="entry name" value="CLECT"/>
    <property type="match status" value="1"/>
</dbReference>
<dbReference type="SUPFAM" id="SSF56436">
    <property type="entry name" value="C-type lectin-like"/>
    <property type="match status" value="1"/>
</dbReference>
<dbReference type="SUPFAM" id="SSF57535">
    <property type="entry name" value="Complement control module/SCR domain"/>
    <property type="match status" value="9"/>
</dbReference>
<dbReference type="SUPFAM" id="SSF57196">
    <property type="entry name" value="EGF/Laminin"/>
    <property type="match status" value="1"/>
</dbReference>
<dbReference type="PROSITE" id="PS00615">
    <property type="entry name" value="C_TYPE_LECTIN_1"/>
    <property type="match status" value="1"/>
</dbReference>
<dbReference type="PROSITE" id="PS50041">
    <property type="entry name" value="C_TYPE_LECTIN_2"/>
    <property type="match status" value="1"/>
</dbReference>
<dbReference type="PROSITE" id="PS00022">
    <property type="entry name" value="EGF_1"/>
    <property type="match status" value="1"/>
</dbReference>
<dbReference type="PROSITE" id="PS01186">
    <property type="entry name" value="EGF_2"/>
    <property type="match status" value="1"/>
</dbReference>
<dbReference type="PROSITE" id="PS50026">
    <property type="entry name" value="EGF_3"/>
    <property type="match status" value="1"/>
</dbReference>
<dbReference type="PROSITE" id="PS50923">
    <property type="entry name" value="SUSHI"/>
    <property type="match status" value="9"/>
</dbReference>
<comment type="function">
    <text evidence="7 14 15 18">Ca(2+)-dependent receptor for myeloid cells that binds to carbohydrates on neutrophils and monocytes. Mediates the interaction of activated endothelial cells or platelets with leukocytes. The ligand recognized is sialyl-Lewis X. Mediates rapid rolling of leukocyte rolling over vascular surfaces during the initial steps in inflammation through interaction with SELPLG. Mediates cell-cell interactions and cell adhesion via the interaction with integrin alpha-IIb/beta3 (ITGA2B:ITGB3) and integrin alpha-V/beta-3 (ITGAV:ITGB3) (PubMed:37184585).</text>
</comment>
<comment type="subunit">
    <text evidence="7 8 10 12 15 16 17 18">Interacts with SNX17. Interacts with SELPLG/PSGL1 and PODXL2 and mediates neutrophil adhesion and leukocyte rolling. This interaction requires the sialyl-Lewis X epitope of SELPLG and PODXL2, and specific tyrosine sulfation on SELPLG. Interacts (via C-type lectin domain) with alpha-IIb/beta3 integrin ITGA2B:ITGB3 and alpha-V/beta-3 integrin ITGAV:ITGB3 (PubMed:37184585). Interacts with alpha5/beta1 integrin ITGA5:ITGB1 and alpha4/beta1 integrin ITGA4:ITGB (PubMed:37184585).</text>
</comment>
<comment type="interaction">
    <interactant intactId="EBI-1030170">
        <id>P16109</id>
    </interactant>
    <interactant intactId="EBI-1030190">
        <id>Q14242</id>
        <label>SELPLG</label>
    </interactant>
    <organismsDiffer>false</organismsDiffer>
    <experiments>4</experiments>
</comment>
<comment type="subcellular location">
    <subcellularLocation>
        <location evidence="14">Cell membrane</location>
        <topology evidence="24">Single-pass type I membrane protein</topology>
    </subcellularLocation>
</comment>
<comment type="tissue specificity">
    <text>Stored in the alpha-granules of platelets and Weibel-Palade bodies of endothelial cells. Upon cell activation by agonists, P-selectin is transported rapidly to the cell surface.</text>
</comment>
<comment type="domain">
    <text evidence="15">The C-type lectin domain is required for binding to integrins (PubMed:37184585). Binding to soluble integrins alpha-V/beta-3 (ITGAV:ITGB3) and alpha-IIb/beta3 (ITGA2B:ITGB) is cation-dependent in order of preference of 1 mM Mn(2+) &gt; Mg(2+) &gt; Ca(2+) (PubMed:37184585). Binds to the allosteric site (site 2) of integrins and activates them (PubMed:37184585). The interaction with integrins may mediate cell-cell interactions and cell adhesion (PubMed:37184585).</text>
</comment>
<comment type="similarity">
    <text evidence="23">Belongs to the selectin/LECAM family.</text>
</comment>
<comment type="online information" name="Functional Glycomics Gateway - Glycan Binding">
    <link uri="http://www.functionalglycomics.org/glycomics/GBPServlet?&amp;operationType=view&amp;cbpId=cbp_hum_Ctlect_354"/>
    <text>P-selectin</text>
</comment>
<reference key="1">
    <citation type="journal article" date="1989" name="Cell">
        <title>Cloning of GMP-140, a granule membrane protein of platelets and endothelium: sequence similarity to proteins involved in cell adhesion and inflammation.</title>
        <authorList>
            <person name="Johnston G.I."/>
            <person name="Cook R.G."/>
            <person name="McEver R.P."/>
        </authorList>
    </citation>
    <scope>NUCLEOTIDE SEQUENCE [GENOMIC DNA / MRNA]</scope>
    <scope>VARIANTS ILE-274; ASN-603 AND LEU-640</scope>
</reference>
<reference key="2">
    <citation type="submission" date="2002-08" db="EMBL/GenBank/DDBJ databases">
        <authorList>
            <consortium name="SeattleSNPs variation discovery resource"/>
        </authorList>
    </citation>
    <scope>NUCLEOTIDE SEQUENCE [GENOMIC DNA]</scope>
    <scope>VARIANTS ARG-179; MET-209; PHE-230; ILE-274; ASN-331; LEU-385; LYS-542; ASN-603; ALA-619; VAL-631; ASN-661; SER-673 AND PRO-756</scope>
</reference>
<reference key="3">
    <citation type="journal article" date="2006" name="Nature">
        <title>The DNA sequence and biological annotation of human chromosome 1.</title>
        <authorList>
            <person name="Gregory S.G."/>
            <person name="Barlow K.F."/>
            <person name="McLay K.E."/>
            <person name="Kaul R."/>
            <person name="Swarbreck D."/>
            <person name="Dunham A."/>
            <person name="Scott C.E."/>
            <person name="Howe K.L."/>
            <person name="Woodfine K."/>
            <person name="Spencer C.C.A."/>
            <person name="Jones M.C."/>
            <person name="Gillson C."/>
            <person name="Searle S."/>
            <person name="Zhou Y."/>
            <person name="Kokocinski F."/>
            <person name="McDonald L."/>
            <person name="Evans R."/>
            <person name="Phillips K."/>
            <person name="Atkinson A."/>
            <person name="Cooper R."/>
            <person name="Jones C."/>
            <person name="Hall R.E."/>
            <person name="Andrews T.D."/>
            <person name="Lloyd C."/>
            <person name="Ainscough R."/>
            <person name="Almeida J.P."/>
            <person name="Ambrose K.D."/>
            <person name="Anderson F."/>
            <person name="Andrew R.W."/>
            <person name="Ashwell R.I.S."/>
            <person name="Aubin K."/>
            <person name="Babbage A.K."/>
            <person name="Bagguley C.L."/>
            <person name="Bailey J."/>
            <person name="Beasley H."/>
            <person name="Bethel G."/>
            <person name="Bird C.P."/>
            <person name="Bray-Allen S."/>
            <person name="Brown J.Y."/>
            <person name="Brown A.J."/>
            <person name="Buckley D."/>
            <person name="Burton J."/>
            <person name="Bye J."/>
            <person name="Carder C."/>
            <person name="Chapman J.C."/>
            <person name="Clark S.Y."/>
            <person name="Clarke G."/>
            <person name="Clee C."/>
            <person name="Cobley V."/>
            <person name="Collier R.E."/>
            <person name="Corby N."/>
            <person name="Coville G.J."/>
            <person name="Davies J."/>
            <person name="Deadman R."/>
            <person name="Dunn M."/>
            <person name="Earthrowl M."/>
            <person name="Ellington A.G."/>
            <person name="Errington H."/>
            <person name="Frankish A."/>
            <person name="Frankland J."/>
            <person name="French L."/>
            <person name="Garner P."/>
            <person name="Garnett J."/>
            <person name="Gay L."/>
            <person name="Ghori M.R.J."/>
            <person name="Gibson R."/>
            <person name="Gilby L.M."/>
            <person name="Gillett W."/>
            <person name="Glithero R.J."/>
            <person name="Grafham D.V."/>
            <person name="Griffiths C."/>
            <person name="Griffiths-Jones S."/>
            <person name="Grocock R."/>
            <person name="Hammond S."/>
            <person name="Harrison E.S.I."/>
            <person name="Hart E."/>
            <person name="Haugen E."/>
            <person name="Heath P.D."/>
            <person name="Holmes S."/>
            <person name="Holt K."/>
            <person name="Howden P.J."/>
            <person name="Hunt A.R."/>
            <person name="Hunt S.E."/>
            <person name="Hunter G."/>
            <person name="Isherwood J."/>
            <person name="James R."/>
            <person name="Johnson C."/>
            <person name="Johnson D."/>
            <person name="Joy A."/>
            <person name="Kay M."/>
            <person name="Kershaw J.K."/>
            <person name="Kibukawa M."/>
            <person name="Kimberley A.M."/>
            <person name="King A."/>
            <person name="Knights A.J."/>
            <person name="Lad H."/>
            <person name="Laird G."/>
            <person name="Lawlor S."/>
            <person name="Leongamornlert D.A."/>
            <person name="Lloyd D.M."/>
            <person name="Loveland J."/>
            <person name="Lovell J."/>
            <person name="Lush M.J."/>
            <person name="Lyne R."/>
            <person name="Martin S."/>
            <person name="Mashreghi-Mohammadi M."/>
            <person name="Matthews L."/>
            <person name="Matthews N.S.W."/>
            <person name="McLaren S."/>
            <person name="Milne S."/>
            <person name="Mistry S."/>
            <person name="Moore M.J.F."/>
            <person name="Nickerson T."/>
            <person name="O'Dell C.N."/>
            <person name="Oliver K."/>
            <person name="Palmeiri A."/>
            <person name="Palmer S.A."/>
            <person name="Parker A."/>
            <person name="Patel D."/>
            <person name="Pearce A.V."/>
            <person name="Peck A.I."/>
            <person name="Pelan S."/>
            <person name="Phelps K."/>
            <person name="Phillimore B.J."/>
            <person name="Plumb R."/>
            <person name="Rajan J."/>
            <person name="Raymond C."/>
            <person name="Rouse G."/>
            <person name="Saenphimmachak C."/>
            <person name="Sehra H.K."/>
            <person name="Sheridan E."/>
            <person name="Shownkeen R."/>
            <person name="Sims S."/>
            <person name="Skuce C.D."/>
            <person name="Smith M."/>
            <person name="Steward C."/>
            <person name="Subramanian S."/>
            <person name="Sycamore N."/>
            <person name="Tracey A."/>
            <person name="Tromans A."/>
            <person name="Van Helmond Z."/>
            <person name="Wall M."/>
            <person name="Wallis J.M."/>
            <person name="White S."/>
            <person name="Whitehead S.L."/>
            <person name="Wilkinson J.E."/>
            <person name="Willey D.L."/>
            <person name="Williams H."/>
            <person name="Wilming L."/>
            <person name="Wray P.W."/>
            <person name="Wu Z."/>
            <person name="Coulson A."/>
            <person name="Vaudin M."/>
            <person name="Sulston J.E."/>
            <person name="Durbin R.M."/>
            <person name="Hubbard T."/>
            <person name="Wooster R."/>
            <person name="Dunham I."/>
            <person name="Carter N.P."/>
            <person name="McVean G."/>
            <person name="Ross M.T."/>
            <person name="Harrow J."/>
            <person name="Olson M.V."/>
            <person name="Beck S."/>
            <person name="Rogers J."/>
            <person name="Bentley D.R."/>
        </authorList>
    </citation>
    <scope>NUCLEOTIDE SEQUENCE [LARGE SCALE GENOMIC DNA]</scope>
</reference>
<reference key="4">
    <citation type="submission" date="2005-07" db="EMBL/GenBank/DDBJ databases">
        <authorList>
            <person name="Mural R.J."/>
            <person name="Istrail S."/>
            <person name="Sutton G.G."/>
            <person name="Florea L."/>
            <person name="Halpern A.L."/>
            <person name="Mobarry C.M."/>
            <person name="Lippert R."/>
            <person name="Walenz B."/>
            <person name="Shatkay H."/>
            <person name="Dew I."/>
            <person name="Miller J.R."/>
            <person name="Flanigan M.J."/>
            <person name="Edwards N.J."/>
            <person name="Bolanos R."/>
            <person name="Fasulo D."/>
            <person name="Halldorsson B.V."/>
            <person name="Hannenhalli S."/>
            <person name="Turner R."/>
            <person name="Yooseph S."/>
            <person name="Lu F."/>
            <person name="Nusskern D.R."/>
            <person name="Shue B.C."/>
            <person name="Zheng X.H."/>
            <person name="Zhong F."/>
            <person name="Delcher A.L."/>
            <person name="Huson D.H."/>
            <person name="Kravitz S.A."/>
            <person name="Mouchard L."/>
            <person name="Reinert K."/>
            <person name="Remington K.A."/>
            <person name="Clark A.G."/>
            <person name="Waterman M.S."/>
            <person name="Eichler E.E."/>
            <person name="Adams M.D."/>
            <person name="Hunkapiller M.W."/>
            <person name="Myers E.W."/>
            <person name="Venter J.C."/>
        </authorList>
    </citation>
    <scope>NUCLEOTIDE SEQUENCE [LARGE SCALE GENOMIC DNA]</scope>
</reference>
<reference key="5">
    <citation type="journal article" date="1993" name="J. Biol. Chem.">
        <title>P-selectin is acylated with palmitic acid and stearic acid at cysteine 766 through a thioester linkage.</title>
        <authorList>
            <person name="Fujimoto T."/>
            <person name="Stroud E."/>
            <person name="Whatley R.E."/>
            <person name="Prescott S.M."/>
            <person name="Muszbek L."/>
            <person name="Laposata M."/>
            <person name="McEver R.P."/>
        </authorList>
    </citation>
    <scope>PALMITOYLATION AT CYS-807</scope>
    <scope>STEAROYLATION AT CYS-807</scope>
</reference>
<reference key="6">
    <citation type="journal article" date="1995" name="Cell">
        <title>A sulfated peptide segment at the amino terminus of PSGL-1 is critical for P-selectin binding.</title>
        <authorList>
            <person name="Sako D."/>
            <person name="Comess K.M."/>
            <person name="Barone K.M."/>
            <person name="Camphausen R.T."/>
            <person name="Cumming D.A."/>
            <person name="Shaw G.D."/>
        </authorList>
    </citation>
    <scope>INTERACTION WITH SELPLG</scope>
</reference>
<reference key="7">
    <citation type="journal article" date="1995" name="Cell">
        <title>PSGL-1 recognition of P-selectin is controlled by a tyrosine sulfation consensus at the PSGL-1 amino terminus.</title>
        <authorList>
            <person name="Pouyani T."/>
            <person name="Seed B."/>
        </authorList>
    </citation>
    <scope>INTERACTION WITH SELPLG</scope>
    <scope>FUNCTION</scope>
</reference>
<reference key="8">
    <citation type="journal article" date="1995" name="J. Biol. Chem.">
        <title>Tyrosine sulfation of P-selectin glycoprotein ligand-1 is required for high affinity binding to P-selectin.</title>
        <authorList>
            <person name="Wilkins P.P."/>
            <person name="Moore K.L."/>
            <person name="McEver R.P."/>
            <person name="Cummings R.D."/>
        </authorList>
    </citation>
    <scope>INTERACTION WITH SELPLG</scope>
</reference>
<reference key="9">
    <citation type="journal article" date="2001" name="Biochem. Biophys. Res. Commun.">
        <title>A new member of the sorting nexin family interacts with the C-terminus of P-selectin.</title>
        <authorList>
            <person name="Florian V."/>
            <person name="Schlueter T."/>
            <person name="Bohnensack R."/>
        </authorList>
    </citation>
    <scope>INTERACTION WITH SNX17</scope>
</reference>
<reference key="10">
    <citation type="journal article" date="2005" name="J. Mol. Biol.">
        <title>Functions of sorting nexin 17 domains and recognition motif for P-selectin trafficking.</title>
        <authorList>
            <person name="Knauth P."/>
            <person name="Schlueter T."/>
            <person name="Czubayko M."/>
            <person name="Kirsch C."/>
            <person name="Florian V."/>
            <person name="Schreckenberger S."/>
            <person name="Hahn H."/>
            <person name="Bohnensack R."/>
        </authorList>
    </citation>
    <scope>INTERACTION WITH SNX17</scope>
</reference>
<reference key="11">
    <citation type="journal article" date="2006" name="Mol. Cell. Proteomics">
        <title>Elucidation of N-glycosylation sites on human platelet proteins: a glycoproteomic approach.</title>
        <authorList>
            <person name="Lewandrowski U."/>
            <person name="Moebius J."/>
            <person name="Walter U."/>
            <person name="Sickmann A."/>
        </authorList>
    </citation>
    <scope>GLYCOSYLATION [LARGE SCALE ANALYSIS] AT ASN-54</scope>
    <source>
        <tissue>Platelet</tissue>
    </source>
</reference>
<reference key="12">
    <citation type="journal article" date="2008" name="J. Immunol.">
        <title>Endoglycan, a member of the CD34 family of sialomucins, is a ligand for the vascular selectins.</title>
        <authorList>
            <person name="Kerr S.C."/>
            <person name="Fieger C.B."/>
            <person name="Snapp K.R."/>
            <person name="Rosen S.D."/>
        </authorList>
    </citation>
    <scope>INTERACTION WITH PODXL2</scope>
</reference>
<reference key="13">
    <citation type="journal article" date="2017" name="J. Biol. Chem.">
        <title>Glycan Bound to the Selectin Low Affinity State Engages Glu-88 to Stabilize the High Affinity State under Force.</title>
        <authorList>
            <person name="Mehta-D'souza P."/>
            <person name="Klopocki A.G."/>
            <person name="Oganesyan V."/>
            <person name="Terzyan S."/>
            <person name="Mather T."/>
            <person name="Li Z."/>
            <person name="Panicker S.R."/>
            <person name="Zhu C."/>
            <person name="McEver R.P."/>
        </authorList>
    </citation>
    <scope>FUNCTION</scope>
    <scope>SUBCELLULAR LOCATION</scope>
    <scope>MUTAGENESIS OF GLU-129</scope>
</reference>
<reference key="14">
    <citation type="journal article" date="2023" name="Life. Sci Alliance">
        <title>The C-type lectin domain of CD62P (P-selectin) functions as an integrin ligand.</title>
        <authorList>
            <person name="Takada Y.K."/>
            <person name="Simon S.I."/>
            <person name="Takada Y."/>
        </authorList>
    </citation>
    <scope>FUNCTION</scope>
    <scope>INTERACTION WITH ITGA2B; ITGAV; ITGB3; ITGA5; ITGA4 AND ITGB1</scope>
    <scope>DOMAIN</scope>
    <scope>MUTAGENESIS OF 57-ARG-LYS-58; 95-ARG-LYS-96; LYS-99; 107-LYS-LYS-108; 125-LYS-ARG-126 AND GLU-129</scope>
</reference>
<reference key="15">
    <citation type="journal article" date="1996" name="Biochemistry">
        <title>Structure and function of the epidermal growth factor domain of P-selectin.</title>
        <authorList>
            <person name="Freedman S.J."/>
            <person name="Sanford D.G."/>
            <person name="Bachovchin W.W."/>
            <person name="Furie B.C."/>
            <person name="Baleja J.D."/>
            <person name="Furie B."/>
        </authorList>
    </citation>
    <scope>STRUCTURE BY NMR OF 160-199</scope>
</reference>
<reference key="16">
    <citation type="journal article" date="1993" name="Protein Sci.">
        <title>Knowledge-based model building of proteins: concepts and examples.</title>
        <authorList>
            <person name="Bajorath J."/>
            <person name="Stenkamp R."/>
            <person name="Aruffo A."/>
        </authorList>
    </citation>
    <scope>3D-STRUCTURE MODELING OF 42-161</scope>
</reference>
<reference key="17">
    <citation type="journal article" date="2000" name="Cell">
        <title>Insights into the molecular basis of leukocyte tethering and rolling revealed by structures of P- and E-selectin bound to SLe(X) and PSGL-1.</title>
        <authorList>
            <person name="Somers W.S."/>
            <person name="Tang J."/>
            <person name="Shaw G.D."/>
            <person name="Camphausen R.T."/>
        </authorList>
    </citation>
    <scope>X-RAY CRYSTALLOGRAPHY (1.9 ANGSTROMS) OF 42-198 IN COMPLEX WITH CALCIUM IONS AND SELPLG</scope>
    <scope>SUBUNIT</scope>
    <scope>DISULFIDE BONDS AT 60-CYS--CYS-158; 131-CYS--CYS-150; 163-CYS--CYS-183 AND 185-CYS--CYS-194</scope>
</reference>
<reference key="18">
    <citation type="journal article" date="2001" name="Cell">
        <authorList>
            <person name="Somers W.S."/>
            <person name="Tang J."/>
            <person name="Shaw G.D."/>
            <person name="Camphausen R.T."/>
        </authorList>
    </citation>
    <scope>ERRATUM OF PUBMED:11081633</scope>
</reference>
<reference key="19">
    <citation type="journal article" date="1998" name="Hum. Mol. Genet.">
        <title>The P-selectin gene is highly polymorphic: reduced frequency of the Pro715 allele carriers in patients with myocardial infarction.</title>
        <authorList>
            <person name="Herrmann S.M."/>
            <person name="Ricard S."/>
            <person name="Nicaud V."/>
            <person name="Mallet C."/>
            <person name="Evans A."/>
            <person name="Ruidavets J.B."/>
            <person name="Arveiler D."/>
            <person name="Luc G."/>
            <person name="Cambien F."/>
        </authorList>
    </citation>
    <scope>VARIANTS ASN-331; ASN-603; LEU-640 AND PRO-756</scope>
</reference>
<reference key="20">
    <citation type="journal article" date="1999" name="Nat. Genet.">
        <title>Characterization of single-nucleotide polymorphisms in coding regions of human genes.</title>
        <authorList>
            <person name="Cargill M."/>
            <person name="Altshuler D."/>
            <person name="Ireland J."/>
            <person name="Sklar P."/>
            <person name="Ardlie K."/>
            <person name="Patil N."/>
            <person name="Shaw N."/>
            <person name="Lane C.R."/>
            <person name="Lim E.P."/>
            <person name="Kalyanaraman N."/>
            <person name="Nemesh J."/>
            <person name="Ziaugra L."/>
            <person name="Friedland L."/>
            <person name="Rolfe A."/>
            <person name="Warrington J."/>
            <person name="Lipshutz R."/>
            <person name="Daley G.Q."/>
            <person name="Lander E.S."/>
        </authorList>
    </citation>
    <scope>VARIANTS MET-209; LEU-301; ASN-331; VAL-365; PHE-500; ASN-603; LEU-640 AND PRO-756</scope>
</reference>
<reference key="21">
    <citation type="journal article" date="1999" name="Nat. Genet.">
        <authorList>
            <person name="Cargill M."/>
            <person name="Altshuler D."/>
            <person name="Ireland J."/>
            <person name="Sklar P."/>
            <person name="Ardlie K."/>
            <person name="Patil N."/>
            <person name="Shaw N."/>
            <person name="Lane C.R."/>
            <person name="Lim E.P."/>
            <person name="Kalyanaraman N."/>
            <person name="Nemesh J."/>
            <person name="Ziaugra L."/>
            <person name="Friedland L."/>
            <person name="Rolfe A."/>
            <person name="Warrington J."/>
            <person name="Lipshutz R."/>
            <person name="Daley G.Q."/>
            <person name="Lander E.S."/>
        </authorList>
    </citation>
    <scope>ERRATUM OF PUBMED:10391209</scope>
</reference>
<reference key="22">
    <citation type="journal article" date="2004" name="Hum. Mol. Genet.">
        <title>Polymorphism in the P-selectin and interleukin-4 genes as determinants of stroke: a population-based, prospective genetic analysis.</title>
        <authorList>
            <person name="Zee R.Y.L."/>
            <person name="Cook N.R."/>
            <person name="Cheng S."/>
            <person name="Reynolds R."/>
            <person name="Erlich H.A."/>
            <person name="Lindpaintner K."/>
            <person name="Ridker P.M."/>
        </authorList>
    </citation>
    <scope>VARIANT LEU-640</scope>
</reference>
<gene>
    <name type="primary">SELP</name>
    <name type="synonym">GMRP</name>
    <name type="synonym">GRMP</name>
</gene>
<keyword id="KW-0002">3D-structure</keyword>
<keyword id="KW-0106">Calcium</keyword>
<keyword id="KW-0130">Cell adhesion</keyword>
<keyword id="KW-1003">Cell membrane</keyword>
<keyword id="KW-1015">Disulfide bond</keyword>
<keyword id="KW-0245">EGF-like domain</keyword>
<keyword id="KW-0325">Glycoprotein</keyword>
<keyword id="KW-0430">Lectin</keyword>
<keyword id="KW-0449">Lipoprotein</keyword>
<keyword id="KW-0472">Membrane</keyword>
<keyword id="KW-0479">Metal-binding</keyword>
<keyword id="KW-0564">Palmitate</keyword>
<keyword id="KW-1267">Proteomics identification</keyword>
<keyword id="KW-1185">Reference proteome</keyword>
<keyword id="KW-0677">Repeat</keyword>
<keyword id="KW-0732">Signal</keyword>
<keyword id="KW-0768">Sushi</keyword>
<keyword id="KW-0812">Transmembrane</keyword>
<keyword id="KW-1133">Transmembrane helix</keyword>
<evidence type="ECO:0000250" key="1"/>
<evidence type="ECO:0000255" key="2"/>
<evidence type="ECO:0000255" key="3">
    <source>
        <dbReference type="PROSITE-ProRule" id="PRU00040"/>
    </source>
</evidence>
<evidence type="ECO:0000255" key="4">
    <source>
        <dbReference type="PROSITE-ProRule" id="PRU00076"/>
    </source>
</evidence>
<evidence type="ECO:0000255" key="5">
    <source>
        <dbReference type="PROSITE-ProRule" id="PRU00302"/>
    </source>
</evidence>
<evidence type="ECO:0000269" key="6">
    <source>
    </source>
</evidence>
<evidence type="ECO:0000269" key="7">
    <source>
    </source>
</evidence>
<evidence type="ECO:0000269" key="8">
    <source>
    </source>
</evidence>
<evidence type="ECO:0000269" key="9">
    <source>
    </source>
</evidence>
<evidence type="ECO:0000269" key="10">
    <source>
    </source>
</evidence>
<evidence type="ECO:0000269" key="11">
    <source>
    </source>
</evidence>
<evidence type="ECO:0000269" key="12">
    <source>
    </source>
</evidence>
<evidence type="ECO:0000269" key="13">
    <source>
    </source>
</evidence>
<evidence type="ECO:0000269" key="14">
    <source>
    </source>
</evidence>
<evidence type="ECO:0000269" key="15">
    <source>
    </source>
</evidence>
<evidence type="ECO:0000269" key="16">
    <source>
    </source>
</evidence>
<evidence type="ECO:0000269" key="17">
    <source>
    </source>
</evidence>
<evidence type="ECO:0000269" key="18">
    <source>
    </source>
</evidence>
<evidence type="ECO:0000269" key="19">
    <source>
    </source>
</evidence>
<evidence type="ECO:0000269" key="20">
    <source>
    </source>
</evidence>
<evidence type="ECO:0000269" key="21">
    <source ref="2"/>
</evidence>
<evidence type="ECO:0000303" key="22">
    <source>
    </source>
</evidence>
<evidence type="ECO:0000305" key="23"/>
<evidence type="ECO:0000305" key="24">
    <source>
    </source>
</evidence>
<evidence type="ECO:0007744" key="25">
    <source>
        <dbReference type="PDB" id="1G1Q"/>
    </source>
</evidence>
<evidence type="ECO:0007744" key="26">
    <source>
        <dbReference type="PDB" id="1G1R"/>
    </source>
</evidence>
<evidence type="ECO:0007744" key="27">
    <source>
        <dbReference type="PDB" id="1G1S"/>
    </source>
</evidence>
<evidence type="ECO:0007829" key="28">
    <source>
        <dbReference type="PDB" id="1G1S"/>
    </source>
</evidence>
<name>LYAM3_HUMAN</name>
<feature type="signal peptide">
    <location>
        <begin position="1"/>
        <end position="41"/>
    </location>
</feature>
<feature type="chain" id="PRO_0000017498" description="P-selectin">
    <location>
        <begin position="42"/>
        <end position="830"/>
    </location>
</feature>
<feature type="topological domain" description="Extracellular" evidence="2">
    <location>
        <begin position="42"/>
        <end position="771"/>
    </location>
</feature>
<feature type="transmembrane region" description="Helical" evidence="2">
    <location>
        <begin position="772"/>
        <end position="795"/>
    </location>
</feature>
<feature type="topological domain" description="Cytoplasmic" evidence="2">
    <location>
        <begin position="796"/>
        <end position="830"/>
    </location>
</feature>
<feature type="domain" description="C-type lectin" evidence="3">
    <location>
        <begin position="58"/>
        <end position="158"/>
    </location>
</feature>
<feature type="domain" description="EGF-like" evidence="4">
    <location>
        <begin position="159"/>
        <end position="195"/>
    </location>
</feature>
<feature type="domain" description="Sushi 1" evidence="5">
    <location>
        <begin position="198"/>
        <end position="259"/>
    </location>
</feature>
<feature type="domain" description="Sushi 2" evidence="5">
    <location>
        <begin position="260"/>
        <end position="321"/>
    </location>
</feature>
<feature type="domain" description="Sushi 3" evidence="5">
    <location>
        <begin position="322"/>
        <end position="383"/>
    </location>
</feature>
<feature type="domain" description="Sushi 4" evidence="5">
    <location>
        <begin position="384"/>
        <end position="445"/>
    </location>
</feature>
<feature type="domain" description="Sushi 5" evidence="5">
    <location>
        <begin position="446"/>
        <end position="507"/>
    </location>
</feature>
<feature type="domain" description="Sushi 6" evidence="5">
    <location>
        <begin position="508"/>
        <end position="569"/>
    </location>
</feature>
<feature type="domain" description="Sushi 7" evidence="5">
    <location>
        <begin position="570"/>
        <end position="631"/>
    </location>
</feature>
<feature type="domain" description="Sushi 8" evidence="5">
    <location>
        <begin position="640"/>
        <end position="701"/>
    </location>
</feature>
<feature type="domain" description="Sushi 9" evidence="5">
    <location>
        <begin position="702"/>
        <end position="763"/>
    </location>
</feature>
<feature type="region of interest" description="Interaction with SNX17">
    <location>
        <begin position="821"/>
        <end position="830"/>
    </location>
</feature>
<feature type="short sequence motif" description="Endocytosis signal" evidence="23">
    <location>
        <begin position="818"/>
        <end position="821"/>
    </location>
</feature>
<feature type="binding site" evidence="7 25 26">
    <location>
        <position position="121"/>
    </location>
    <ligand>
        <name>Ca(2+)</name>
        <dbReference type="ChEBI" id="CHEBI:29108"/>
    </ligand>
</feature>
<feature type="binding site" evidence="7 26">
    <location>
        <position position="123"/>
    </location>
    <ligand>
        <name>a carbohydrate</name>
        <dbReference type="ChEBI" id="CHEBI:16646"/>
    </ligand>
</feature>
<feature type="binding site" evidence="7 25 26">
    <location>
        <position position="123"/>
    </location>
    <ligand>
        <name>Ca(2+)</name>
        <dbReference type="ChEBI" id="CHEBI:29108"/>
    </ligand>
</feature>
<feature type="binding site" evidence="26">
    <location>
        <position position="124"/>
    </location>
    <ligand>
        <name>Ca(2+)</name>
        <dbReference type="ChEBI" id="CHEBI:29108"/>
    </ligand>
</feature>
<feature type="binding site" evidence="7 26">
    <location>
        <position position="133"/>
    </location>
    <ligand>
        <name>a carbohydrate</name>
        <dbReference type="ChEBI" id="CHEBI:16646"/>
    </ligand>
</feature>
<feature type="binding site" evidence="7 26">
    <location>
        <position position="146"/>
    </location>
    <ligand>
        <name>a carbohydrate</name>
        <dbReference type="ChEBI" id="CHEBI:16646"/>
    </ligand>
</feature>
<feature type="binding site" evidence="7 25 26">
    <location>
        <position position="146"/>
    </location>
    <ligand>
        <name>Ca(2+)</name>
        <dbReference type="ChEBI" id="CHEBI:29108"/>
    </ligand>
</feature>
<feature type="binding site" evidence="7 25 26">
    <location>
        <position position="147"/>
    </location>
    <ligand>
        <name>Ca(2+)</name>
        <dbReference type="ChEBI" id="CHEBI:29108"/>
    </ligand>
</feature>
<feature type="lipid moiety-binding region" description="S-palmitoyl cysteine; alternate" evidence="19">
    <location>
        <position position="807"/>
    </location>
</feature>
<feature type="lipid moiety-binding region" description="S-stearoyl cysteine; alternate" evidence="19">
    <location>
        <position position="807"/>
    </location>
</feature>
<feature type="glycosylation site" description="N-linked (GlcNAc...) asparagine" evidence="11">
    <location>
        <position position="54"/>
    </location>
</feature>
<feature type="glycosylation site" description="N-linked (GlcNAc...) asparagine" evidence="2">
    <location>
        <position position="98"/>
    </location>
</feature>
<feature type="glycosylation site" description="N-linked (GlcNAc...) asparagine" evidence="2">
    <location>
        <position position="180"/>
    </location>
</feature>
<feature type="glycosylation site" description="N-linked (GlcNAc...) asparagine" evidence="2">
    <location>
        <position position="212"/>
    </location>
</feature>
<feature type="glycosylation site" description="N-linked (GlcNAc...) asparagine" evidence="2">
    <location>
        <position position="219"/>
    </location>
</feature>
<feature type="glycosylation site" description="N-linked (GlcNAc...) asparagine" evidence="2">
    <location>
        <position position="411"/>
    </location>
</feature>
<feature type="glycosylation site" description="N-linked (GlcNAc...) asparagine" evidence="2">
    <location>
        <position position="460"/>
    </location>
</feature>
<feature type="glycosylation site" description="N-linked (GlcNAc...) asparagine" evidence="2">
    <location>
        <position position="518"/>
    </location>
</feature>
<feature type="glycosylation site" description="N-linked (GlcNAc...) asparagine" evidence="2">
    <location>
        <position position="665"/>
    </location>
</feature>
<feature type="glycosylation site" description="N-linked (GlcNAc...) asparagine" evidence="2">
    <location>
        <position position="716"/>
    </location>
</feature>
<feature type="glycosylation site" description="N-linked (GlcNAc...) asparagine" evidence="2">
    <location>
        <position position="723"/>
    </location>
</feature>
<feature type="glycosylation site" description="N-linked (GlcNAc...) asparagine" evidence="2">
    <location>
        <position position="741"/>
    </location>
</feature>
<feature type="disulfide bond" evidence="7 25 26 27">
    <location>
        <begin position="60"/>
        <end position="158"/>
    </location>
</feature>
<feature type="disulfide bond" evidence="7 25 26 27">
    <location>
        <begin position="131"/>
        <end position="150"/>
    </location>
</feature>
<feature type="disulfide bond" evidence="7 25 26 27">
    <location>
        <begin position="163"/>
        <end position="174"/>
    </location>
</feature>
<feature type="disulfide bond" evidence="7 25 26 27">
    <location>
        <begin position="168"/>
        <end position="183"/>
    </location>
</feature>
<feature type="disulfide bond" evidence="7 25 26 27">
    <location>
        <begin position="185"/>
        <end position="194"/>
    </location>
</feature>
<feature type="disulfide bond" evidence="1">
    <location>
        <begin position="200"/>
        <end position="244"/>
    </location>
</feature>
<feature type="disulfide bond" evidence="1">
    <location>
        <begin position="230"/>
        <end position="257"/>
    </location>
</feature>
<feature type="disulfide bond" evidence="1">
    <location>
        <begin position="262"/>
        <end position="306"/>
    </location>
</feature>
<feature type="disulfide bond" evidence="1">
    <location>
        <begin position="292"/>
        <end position="319"/>
    </location>
</feature>
<feature type="disulfide bond" evidence="1">
    <location>
        <begin position="324"/>
        <end position="368"/>
    </location>
</feature>
<feature type="disulfide bond" evidence="1">
    <location>
        <begin position="354"/>
        <end position="381"/>
    </location>
</feature>
<feature type="disulfide bond" evidence="1">
    <location>
        <begin position="386"/>
        <end position="430"/>
    </location>
</feature>
<feature type="disulfide bond" evidence="1">
    <location>
        <begin position="416"/>
        <end position="443"/>
    </location>
</feature>
<feature type="disulfide bond" evidence="1">
    <location>
        <begin position="448"/>
        <end position="492"/>
    </location>
</feature>
<feature type="disulfide bond" evidence="1">
    <location>
        <begin position="478"/>
        <end position="505"/>
    </location>
</feature>
<feature type="disulfide bond" evidence="1">
    <location>
        <begin position="510"/>
        <end position="554"/>
    </location>
</feature>
<feature type="disulfide bond" evidence="1">
    <location>
        <begin position="540"/>
        <end position="567"/>
    </location>
</feature>
<feature type="disulfide bond" evidence="1">
    <location>
        <begin position="572"/>
        <end position="616"/>
    </location>
</feature>
<feature type="disulfide bond" evidence="1">
    <location>
        <begin position="602"/>
        <end position="629"/>
    </location>
</feature>
<feature type="disulfide bond" evidence="1">
    <location>
        <begin position="642"/>
        <end position="686"/>
    </location>
</feature>
<feature type="disulfide bond" evidence="1">
    <location>
        <begin position="672"/>
        <end position="699"/>
    </location>
</feature>
<feature type="disulfide bond" evidence="1">
    <location>
        <begin position="704"/>
        <end position="748"/>
    </location>
</feature>
<feature type="disulfide bond" evidence="1">
    <location>
        <begin position="734"/>
        <end position="761"/>
    </location>
</feature>
<feature type="sequence variant" id="VAR_019381" description="In dbSNP:rs3917718." evidence="21">
    <original>G</original>
    <variation>R</variation>
    <location>
        <position position="179"/>
    </location>
</feature>
<feature type="sequence variant" id="VAR_013910" description="In dbSNP:rs6125." evidence="6 21">
    <original>V</original>
    <variation>M</variation>
    <location>
        <position position="209"/>
    </location>
</feature>
<feature type="sequence variant" id="VAR_019382" description="In dbSNP:rs3917869." evidence="21">
    <original>C</original>
    <variation>F</variation>
    <location>
        <position position="230"/>
    </location>
</feature>
<feature type="sequence variant" id="VAR_019383" description="In dbSNP:rs3917724." evidence="13 21">
    <original>T</original>
    <variation>I</variation>
    <location>
        <position position="274"/>
    </location>
</feature>
<feature type="sequence variant" id="VAR_013911" description="In dbSNP:rs6124." evidence="6">
    <original>P</original>
    <variation>L</variation>
    <location>
        <position position="301"/>
    </location>
</feature>
<feature type="sequence variant" id="VAR_004192" description="In dbSNP:rs6131." evidence="6 20 21">
    <original>S</original>
    <variation>N</variation>
    <location>
        <position position="331"/>
    </location>
</feature>
<feature type="sequence variant" id="VAR_013912" description="In dbSNP:rs6134." evidence="6">
    <original>M</original>
    <variation>V</variation>
    <location>
        <position position="365"/>
    </location>
</feature>
<feature type="sequence variant" id="VAR_019384" description="In dbSNP:rs3917742." evidence="21">
    <original>S</original>
    <variation>L</variation>
    <location>
        <position position="385"/>
    </location>
</feature>
<feature type="sequence variant" id="VAR_013913" description="In dbSNP:rs6130." evidence="6">
    <original>S</original>
    <variation>F</variation>
    <location>
        <position position="500"/>
    </location>
</feature>
<feature type="sequence variant" id="VAR_019385" description="In dbSNP:rs3917769." evidence="21">
    <original>E</original>
    <variation>K</variation>
    <location>
        <position position="542"/>
    </location>
</feature>
<feature type="sequence variant" id="VAR_004193" description="In dbSNP:rs6127." evidence="6 13 20 21">
    <original>D</original>
    <variation>N</variation>
    <location>
        <position position="603"/>
    </location>
</feature>
<feature type="sequence variant" id="VAR_019386" description="In dbSNP:rs2228672." evidence="21">
    <original>S</original>
    <variation>A</variation>
    <location>
        <position position="619"/>
    </location>
</feature>
<feature type="sequence variant" id="VAR_019387" description="In dbSNP:rs3917812." evidence="21">
    <original>G</original>
    <variation>V</variation>
    <location>
        <position position="631"/>
    </location>
</feature>
<feature type="sequence variant" id="VAR_004194" description="In dbSNP:rs6133." evidence="6 9 13 20">
    <original>V</original>
    <variation>L</variation>
    <location>
        <position position="640"/>
    </location>
</feature>
<feature type="sequence variant" id="VAR_019388" description="In dbSNP:rs3917814." evidence="21">
    <original>T</original>
    <variation>N</variation>
    <location>
        <position position="661"/>
    </location>
</feature>
<feature type="sequence variant" id="VAR_019389" description="In dbSNP:rs3917815." evidence="21">
    <original>N</original>
    <variation>S</variation>
    <location>
        <position position="673"/>
    </location>
</feature>
<feature type="sequence variant" id="VAR_004195" description="In dbSNP:rs6136." evidence="6 20 21">
    <original>T</original>
    <variation>P</variation>
    <location>
        <position position="756"/>
    </location>
</feature>
<feature type="mutagenesis site" description="Loss of interaction with integrins. Reduces cell adhesion." evidence="15">
    <original>RK</original>
    <variation>EE</variation>
    <location>
        <begin position="57"/>
        <end position="58"/>
    </location>
</feature>
<feature type="mutagenesis site" description="Enhances interaction with integrins." evidence="15">
    <original>RK</original>
    <variation>EE</variation>
    <location>
        <begin position="95"/>
        <end position="96"/>
    </location>
</feature>
<feature type="mutagenesis site" description="Reduced interaction with integrins." evidence="15">
    <original>K</original>
    <variation>E</variation>
    <location>
        <position position="99"/>
    </location>
</feature>
<feature type="mutagenesis site" description="Reduced interaction with integrins." evidence="15">
    <original>KK</original>
    <variation>EE</variation>
    <location>
        <begin position="107"/>
        <end position="108"/>
    </location>
</feature>
<feature type="mutagenesis site" description="Reduced interaction with integrins." evidence="15">
    <original>KR</original>
    <variation>EE</variation>
    <location>
        <begin position="125"/>
        <end position="126"/>
    </location>
</feature>
<feature type="mutagenesis site" description="Impairs interaction with SELPLG. Abolishes cell rolling on glycan ligands. Disrupts interaction with glycan. Does not affect interaction with integrins." evidence="14 15">
    <original>E</original>
    <variation>D</variation>
    <location>
        <position position="129"/>
    </location>
</feature>
<feature type="strand" evidence="28">
    <location>
        <begin position="43"/>
        <end position="46"/>
    </location>
</feature>
<feature type="helix" evidence="28">
    <location>
        <begin position="53"/>
        <end position="63"/>
    </location>
</feature>
<feature type="strand" evidence="28">
    <location>
        <begin position="64"/>
        <end position="67"/>
    </location>
</feature>
<feature type="helix" evidence="28">
    <location>
        <begin position="73"/>
        <end position="82"/>
    </location>
</feature>
<feature type="strand" evidence="28">
    <location>
        <begin position="90"/>
        <end position="97"/>
    </location>
</feature>
<feature type="strand" evidence="28">
    <location>
        <begin position="100"/>
        <end position="103"/>
    </location>
</feature>
<feature type="turn" evidence="28">
    <location>
        <begin position="104"/>
        <end position="106"/>
    </location>
</feature>
<feature type="turn" evidence="28">
    <location>
        <begin position="112"/>
        <end position="114"/>
    </location>
</feature>
<feature type="strand" evidence="28">
    <location>
        <begin position="131"/>
        <end position="134"/>
    </location>
</feature>
<feature type="strand" evidence="28">
    <location>
        <begin position="139"/>
        <end position="141"/>
    </location>
</feature>
<feature type="strand" evidence="28">
    <location>
        <begin position="145"/>
        <end position="148"/>
    </location>
</feature>
<feature type="strand" evidence="28">
    <location>
        <begin position="154"/>
        <end position="160"/>
    </location>
</feature>
<feature type="helix" evidence="28">
    <location>
        <begin position="167"/>
        <end position="170"/>
    </location>
</feature>
<feature type="strand" evidence="28">
    <location>
        <begin position="171"/>
        <end position="176"/>
    </location>
</feature>
<feature type="strand" evidence="28">
    <location>
        <begin position="178"/>
        <end position="185"/>
    </location>
</feature>
<feature type="strand" evidence="28">
    <location>
        <begin position="189"/>
        <end position="191"/>
    </location>
</feature>
<organism>
    <name type="scientific">Homo sapiens</name>
    <name type="common">Human</name>
    <dbReference type="NCBI Taxonomy" id="9606"/>
    <lineage>
        <taxon>Eukaryota</taxon>
        <taxon>Metazoa</taxon>
        <taxon>Chordata</taxon>
        <taxon>Craniata</taxon>
        <taxon>Vertebrata</taxon>
        <taxon>Euteleostomi</taxon>
        <taxon>Mammalia</taxon>
        <taxon>Eutheria</taxon>
        <taxon>Euarchontoglires</taxon>
        <taxon>Primates</taxon>
        <taxon>Haplorrhini</taxon>
        <taxon>Catarrhini</taxon>
        <taxon>Hominidae</taxon>
        <taxon>Homo</taxon>
    </lineage>
</organism>
<sequence>MANCQIAILYQRFQRVVFGISQLLCFSALISELTNQKEVAAWTYHYSTKAYSWNISRKYCQNRYTDLVAIQNKNEIDYLNKVLPYYSSYYWIGIRKNNKTWTWVGTKKALTNEAENWADNEPNNKRNNEDCVEIYIKSPSAPGKWNDEHCLKKKHALCYTASCQDMSCSKQGECLETIGNYTCSCYPGFYGPECEYVRECGELELPQHVLMNCSHPLGNFSFNSQCSFHCTDGYQVNGPSKLECLASGIWTNKPPQCLAAQCPPLKIPERGNMTCLHSAKAFQHQSSCSFSCEEGFALVGPEVVQCTASGVWTAPAPVCKAVQCQHLEAPSEGTMDCVHPLTAFAYGSSCKFECQPGYRVRGLDMLRCIDSGHWSAPLPTCEAISCEPLESPVHGSMDCSPSLRAFQYDTNCSFRCAEGFMLRGADIVRCDNLGQWTAPAPVCQALQCQDLPVPNEARVNCSHPFGAFRYQSVCSFTCNEGLLLVGASVLQCLATGNWNSVPPECQAIPCTPLLSPQNGTMTCVQPLGSSSYKSTCQFICDEGYSLSGPERLDCTRSGRWTDSPPMCEAIKCPELFAPEQGSLDCSDTRGEFNVGSTCHFSCDNGFKLEGPNNVECTTSGRWSATPPTCKGIASLPTPGVQCPALTTPGQGTMYCRHHPGTFGFNTTCYFGCNAGFTLIGDSTLSCRPSGQWTAVTPACRAVKCSELHVNKPIAMNCSNLWGNFSYGSICSFHCLEGQLLNGSAQTACQENGHWSTTVPTCQAGPLTIQEALTYFGGAVASTIGLIMGGTLLALLRKRFRQKDDGKCPLNPHSHLGTYGVFTNAAFDPSP</sequence>
<accession>P16109</accession>
<accession>Q5R344</accession>
<accession>Q8IVD1</accession>